<comment type="function">
    <text evidence="1">Formation of pseudouridine at positions 38, 39 and 40 in the anticodon stem and loop of transfer RNAs.</text>
</comment>
<comment type="catalytic activity">
    <reaction evidence="1">
        <text>uridine(38/39/40) in tRNA = pseudouridine(38/39/40) in tRNA</text>
        <dbReference type="Rhea" id="RHEA:22376"/>
        <dbReference type="Rhea" id="RHEA-COMP:10085"/>
        <dbReference type="Rhea" id="RHEA-COMP:10087"/>
        <dbReference type="ChEBI" id="CHEBI:65314"/>
        <dbReference type="ChEBI" id="CHEBI:65315"/>
        <dbReference type="EC" id="5.4.99.12"/>
    </reaction>
</comment>
<comment type="subunit">
    <text evidence="1">Homodimer.</text>
</comment>
<comment type="similarity">
    <text evidence="1">Belongs to the tRNA pseudouridine synthase TruA family.</text>
</comment>
<evidence type="ECO:0000255" key="1">
    <source>
        <dbReference type="HAMAP-Rule" id="MF_00171"/>
    </source>
</evidence>
<name>TRUA_STRP3</name>
<organism>
    <name type="scientific">Streptococcus pyogenes serotype M3 (strain ATCC BAA-595 / MGAS315)</name>
    <dbReference type="NCBI Taxonomy" id="198466"/>
    <lineage>
        <taxon>Bacteria</taxon>
        <taxon>Bacillati</taxon>
        <taxon>Bacillota</taxon>
        <taxon>Bacilli</taxon>
        <taxon>Lactobacillales</taxon>
        <taxon>Streptococcaceae</taxon>
        <taxon>Streptococcus</taxon>
    </lineage>
</organism>
<gene>
    <name evidence="1" type="primary">truA</name>
    <name type="ordered locus">SpyM3_1639</name>
</gene>
<reference key="1">
    <citation type="journal article" date="2002" name="Proc. Natl. Acad. Sci. U.S.A.">
        <title>Genome sequence of a serotype M3 strain of group A Streptococcus: phage-encoded toxins, the high-virulence phenotype, and clone emergence.</title>
        <authorList>
            <person name="Beres S.B."/>
            <person name="Sylva G.L."/>
            <person name="Barbian K.D."/>
            <person name="Lei B."/>
            <person name="Hoff J.S."/>
            <person name="Mammarella N.D."/>
            <person name="Liu M.-Y."/>
            <person name="Smoot J.C."/>
            <person name="Porcella S.F."/>
            <person name="Parkins L.D."/>
            <person name="Campbell D.S."/>
            <person name="Smith T.M."/>
            <person name="McCormick J.K."/>
            <person name="Leung D.Y.M."/>
            <person name="Schlievert P.M."/>
            <person name="Musser J.M."/>
        </authorList>
    </citation>
    <scope>NUCLEOTIDE SEQUENCE [LARGE SCALE GENOMIC DNA]</scope>
    <source>
        <strain>ATCC BAA-595 / MGAS315</strain>
    </source>
</reference>
<feature type="chain" id="PRO_0000057465" description="tRNA pseudouridine synthase A">
    <location>
        <begin position="1"/>
        <end position="249"/>
    </location>
</feature>
<feature type="active site" description="Nucleophile" evidence="1">
    <location>
        <position position="53"/>
    </location>
</feature>
<feature type="binding site" evidence="1">
    <location>
        <position position="111"/>
    </location>
    <ligand>
        <name>substrate</name>
    </ligand>
</feature>
<protein>
    <recommendedName>
        <fullName evidence="1">tRNA pseudouridine synthase A</fullName>
        <ecNumber evidence="1">5.4.99.12</ecNumber>
    </recommendedName>
    <alternativeName>
        <fullName evidence="1">tRNA pseudouridine(38-40) synthase</fullName>
    </alternativeName>
    <alternativeName>
        <fullName evidence="1">tRNA pseudouridylate synthase I</fullName>
    </alternativeName>
    <alternativeName>
        <fullName evidence="1">tRNA-uridine isomerase I</fullName>
    </alternativeName>
</protein>
<sequence>MVRYKATISYDGTLFSGFQRQRHLRTVQEEIEKTLYKLNNGTKIIIHGAGRTDAGVHAYGQVIHFDLPQEQEVEKLRFALDTQTPEDIDVVNIEKVADDFHCRYQKHLKTYEFLVDNGRPKNPMMRHYTTHYPYTLNIKLMQDAINGLVGTHDFTGFTAAGTSVQNKVRTITKATVSRDEKTDFLVFTFSGNGFLYKQVRNMVGTLLKIGNGQMPVEQVKVILSSKNRQLAGPTISGNGLYLKEICYEN</sequence>
<proteinExistence type="inferred from homology"/>
<keyword id="KW-0413">Isomerase</keyword>
<keyword id="KW-0819">tRNA processing</keyword>
<accession>P0DD46</accession>
<accession>Q8K5W2</accession>
<dbReference type="EC" id="5.4.99.12" evidence="1"/>
<dbReference type="EMBL" id="AE014074">
    <property type="protein sequence ID" value="AAM80246.1"/>
    <property type="molecule type" value="Genomic_DNA"/>
</dbReference>
<dbReference type="RefSeq" id="WP_002995162.1">
    <property type="nucleotide sequence ID" value="NC_004070.1"/>
</dbReference>
<dbReference type="SMR" id="P0DD46"/>
<dbReference type="GeneID" id="69900227"/>
<dbReference type="KEGG" id="spg:SpyM3_1639"/>
<dbReference type="HOGENOM" id="CLU_014673_0_1_9"/>
<dbReference type="Proteomes" id="UP000000564">
    <property type="component" value="Chromosome"/>
</dbReference>
<dbReference type="GO" id="GO:0003723">
    <property type="term" value="F:RNA binding"/>
    <property type="evidence" value="ECO:0007669"/>
    <property type="project" value="InterPro"/>
</dbReference>
<dbReference type="GO" id="GO:0160147">
    <property type="term" value="F:tRNA pseudouridine(38-40) synthase activity"/>
    <property type="evidence" value="ECO:0007669"/>
    <property type="project" value="UniProtKB-EC"/>
</dbReference>
<dbReference type="GO" id="GO:0031119">
    <property type="term" value="P:tRNA pseudouridine synthesis"/>
    <property type="evidence" value="ECO:0007669"/>
    <property type="project" value="UniProtKB-UniRule"/>
</dbReference>
<dbReference type="CDD" id="cd02570">
    <property type="entry name" value="PseudoU_synth_EcTruA"/>
    <property type="match status" value="1"/>
</dbReference>
<dbReference type="FunFam" id="3.30.70.580:FF:000001">
    <property type="entry name" value="tRNA pseudouridine synthase A"/>
    <property type="match status" value="1"/>
</dbReference>
<dbReference type="Gene3D" id="3.30.70.660">
    <property type="entry name" value="Pseudouridine synthase I, catalytic domain, C-terminal subdomain"/>
    <property type="match status" value="1"/>
</dbReference>
<dbReference type="Gene3D" id="3.30.70.580">
    <property type="entry name" value="Pseudouridine synthase I, catalytic domain, N-terminal subdomain"/>
    <property type="match status" value="1"/>
</dbReference>
<dbReference type="HAMAP" id="MF_00171">
    <property type="entry name" value="TruA"/>
    <property type="match status" value="1"/>
</dbReference>
<dbReference type="InterPro" id="IPR020103">
    <property type="entry name" value="PsdUridine_synth_cat_dom_sf"/>
</dbReference>
<dbReference type="InterPro" id="IPR001406">
    <property type="entry name" value="PsdUridine_synth_TruA"/>
</dbReference>
<dbReference type="InterPro" id="IPR020097">
    <property type="entry name" value="PsdUridine_synth_TruA_a/b_dom"/>
</dbReference>
<dbReference type="InterPro" id="IPR020095">
    <property type="entry name" value="PsdUridine_synth_TruA_C"/>
</dbReference>
<dbReference type="InterPro" id="IPR020094">
    <property type="entry name" value="TruA/RsuA/RluB/E/F_N"/>
</dbReference>
<dbReference type="NCBIfam" id="TIGR00071">
    <property type="entry name" value="hisT_truA"/>
    <property type="match status" value="1"/>
</dbReference>
<dbReference type="PANTHER" id="PTHR11142">
    <property type="entry name" value="PSEUDOURIDYLATE SYNTHASE"/>
    <property type="match status" value="1"/>
</dbReference>
<dbReference type="PANTHER" id="PTHR11142:SF0">
    <property type="entry name" value="TRNA PSEUDOURIDINE SYNTHASE-LIKE 1"/>
    <property type="match status" value="1"/>
</dbReference>
<dbReference type="Pfam" id="PF01416">
    <property type="entry name" value="PseudoU_synth_1"/>
    <property type="match status" value="2"/>
</dbReference>
<dbReference type="PIRSF" id="PIRSF001430">
    <property type="entry name" value="tRNA_psdUrid_synth"/>
    <property type="match status" value="1"/>
</dbReference>
<dbReference type="SUPFAM" id="SSF55120">
    <property type="entry name" value="Pseudouridine synthase"/>
    <property type="match status" value="1"/>
</dbReference>